<accession>A4YJN0</accession>
<sequence length="360" mass="39914">MSDLASLETSILDQIAAAGDEAALEAVRVAALGKKGSISALLATLGKMSPDERKTQGAAINLAKDKVTQALSARRDVLKAAALDARLAAETIDVTLPLQDTPADTGRIHPLSQVMDELTTIFADMGFSIAEGPDVETDDYNFTKLNFPEGHPAREMHDTFFFNPKEDGSRMLLRTHTSPVQVRTMLSQKPPIRVICPGRTYRIDSDATHTPQFHQVEGLVIDKGSHLGHLKWILHEFCKAFFEVDHINMKFRPSFFPFTEPSLEVDIQCRRDKGEIRFGEGEDWLEILGCGMVHPNVLRACGIDPDEYQGFAWGMGIDRIAMLKYGMSDLRQLFEGDVRWLSHYGFKPLEVPTLAGGLST</sequence>
<gene>
    <name evidence="1" type="primary">pheS</name>
    <name type="ordered locus">BRADO0139</name>
</gene>
<name>SYFA_BRASO</name>
<keyword id="KW-0030">Aminoacyl-tRNA synthetase</keyword>
<keyword id="KW-0067">ATP-binding</keyword>
<keyword id="KW-0963">Cytoplasm</keyword>
<keyword id="KW-0436">Ligase</keyword>
<keyword id="KW-0460">Magnesium</keyword>
<keyword id="KW-0479">Metal-binding</keyword>
<keyword id="KW-0547">Nucleotide-binding</keyword>
<keyword id="KW-0648">Protein biosynthesis</keyword>
<keyword id="KW-1185">Reference proteome</keyword>
<dbReference type="EC" id="6.1.1.20" evidence="1"/>
<dbReference type="EMBL" id="CU234118">
    <property type="protein sequence ID" value="CAL74106.1"/>
    <property type="molecule type" value="Genomic_DNA"/>
</dbReference>
<dbReference type="RefSeq" id="WP_011923401.1">
    <property type="nucleotide sequence ID" value="NC_009445.1"/>
</dbReference>
<dbReference type="SMR" id="A4YJN0"/>
<dbReference type="STRING" id="114615.BRADO0139"/>
<dbReference type="KEGG" id="bra:BRADO0139"/>
<dbReference type="eggNOG" id="COG0016">
    <property type="taxonomic scope" value="Bacteria"/>
</dbReference>
<dbReference type="HOGENOM" id="CLU_025086_0_1_5"/>
<dbReference type="OrthoDB" id="9800719at2"/>
<dbReference type="Proteomes" id="UP000001994">
    <property type="component" value="Chromosome"/>
</dbReference>
<dbReference type="GO" id="GO:0005737">
    <property type="term" value="C:cytoplasm"/>
    <property type="evidence" value="ECO:0007669"/>
    <property type="project" value="UniProtKB-SubCell"/>
</dbReference>
<dbReference type="GO" id="GO:0005524">
    <property type="term" value="F:ATP binding"/>
    <property type="evidence" value="ECO:0007669"/>
    <property type="project" value="UniProtKB-UniRule"/>
</dbReference>
<dbReference type="GO" id="GO:0000287">
    <property type="term" value="F:magnesium ion binding"/>
    <property type="evidence" value="ECO:0007669"/>
    <property type="project" value="UniProtKB-UniRule"/>
</dbReference>
<dbReference type="GO" id="GO:0004826">
    <property type="term" value="F:phenylalanine-tRNA ligase activity"/>
    <property type="evidence" value="ECO:0007669"/>
    <property type="project" value="UniProtKB-UniRule"/>
</dbReference>
<dbReference type="GO" id="GO:0000049">
    <property type="term" value="F:tRNA binding"/>
    <property type="evidence" value="ECO:0007669"/>
    <property type="project" value="InterPro"/>
</dbReference>
<dbReference type="GO" id="GO:0006432">
    <property type="term" value="P:phenylalanyl-tRNA aminoacylation"/>
    <property type="evidence" value="ECO:0007669"/>
    <property type="project" value="UniProtKB-UniRule"/>
</dbReference>
<dbReference type="CDD" id="cd00496">
    <property type="entry name" value="PheRS_alpha_core"/>
    <property type="match status" value="1"/>
</dbReference>
<dbReference type="FunFam" id="3.30.930.10:FF:000003">
    <property type="entry name" value="Phenylalanine--tRNA ligase alpha subunit"/>
    <property type="match status" value="1"/>
</dbReference>
<dbReference type="Gene3D" id="3.30.930.10">
    <property type="entry name" value="Bira Bifunctional Protein, Domain 2"/>
    <property type="match status" value="1"/>
</dbReference>
<dbReference type="HAMAP" id="MF_00281">
    <property type="entry name" value="Phe_tRNA_synth_alpha1"/>
    <property type="match status" value="1"/>
</dbReference>
<dbReference type="InterPro" id="IPR006195">
    <property type="entry name" value="aa-tRNA-synth_II"/>
</dbReference>
<dbReference type="InterPro" id="IPR045864">
    <property type="entry name" value="aa-tRNA-synth_II/BPL/LPL"/>
</dbReference>
<dbReference type="InterPro" id="IPR004529">
    <property type="entry name" value="Phe-tRNA-synth_IIc_asu"/>
</dbReference>
<dbReference type="InterPro" id="IPR004188">
    <property type="entry name" value="Phe-tRNA_ligase_II_N"/>
</dbReference>
<dbReference type="InterPro" id="IPR022911">
    <property type="entry name" value="Phe_tRNA_ligase_alpha1_bac"/>
</dbReference>
<dbReference type="InterPro" id="IPR002319">
    <property type="entry name" value="Phenylalanyl-tRNA_Synthase"/>
</dbReference>
<dbReference type="InterPro" id="IPR010978">
    <property type="entry name" value="tRNA-bd_arm"/>
</dbReference>
<dbReference type="NCBIfam" id="TIGR00468">
    <property type="entry name" value="pheS"/>
    <property type="match status" value="1"/>
</dbReference>
<dbReference type="PANTHER" id="PTHR11538:SF41">
    <property type="entry name" value="PHENYLALANINE--TRNA LIGASE, MITOCHONDRIAL"/>
    <property type="match status" value="1"/>
</dbReference>
<dbReference type="PANTHER" id="PTHR11538">
    <property type="entry name" value="PHENYLALANYL-TRNA SYNTHETASE"/>
    <property type="match status" value="1"/>
</dbReference>
<dbReference type="Pfam" id="PF02912">
    <property type="entry name" value="Phe_tRNA-synt_N"/>
    <property type="match status" value="1"/>
</dbReference>
<dbReference type="Pfam" id="PF01409">
    <property type="entry name" value="tRNA-synt_2d"/>
    <property type="match status" value="1"/>
</dbReference>
<dbReference type="SUPFAM" id="SSF55681">
    <property type="entry name" value="Class II aaRS and biotin synthetases"/>
    <property type="match status" value="1"/>
</dbReference>
<dbReference type="SUPFAM" id="SSF46589">
    <property type="entry name" value="tRNA-binding arm"/>
    <property type="match status" value="1"/>
</dbReference>
<dbReference type="PROSITE" id="PS50862">
    <property type="entry name" value="AA_TRNA_LIGASE_II"/>
    <property type="match status" value="1"/>
</dbReference>
<comment type="catalytic activity">
    <reaction evidence="1">
        <text>tRNA(Phe) + L-phenylalanine + ATP = L-phenylalanyl-tRNA(Phe) + AMP + diphosphate + H(+)</text>
        <dbReference type="Rhea" id="RHEA:19413"/>
        <dbReference type="Rhea" id="RHEA-COMP:9668"/>
        <dbReference type="Rhea" id="RHEA-COMP:9699"/>
        <dbReference type="ChEBI" id="CHEBI:15378"/>
        <dbReference type="ChEBI" id="CHEBI:30616"/>
        <dbReference type="ChEBI" id="CHEBI:33019"/>
        <dbReference type="ChEBI" id="CHEBI:58095"/>
        <dbReference type="ChEBI" id="CHEBI:78442"/>
        <dbReference type="ChEBI" id="CHEBI:78531"/>
        <dbReference type="ChEBI" id="CHEBI:456215"/>
        <dbReference type="EC" id="6.1.1.20"/>
    </reaction>
</comment>
<comment type="cofactor">
    <cofactor evidence="1">
        <name>Mg(2+)</name>
        <dbReference type="ChEBI" id="CHEBI:18420"/>
    </cofactor>
    <text evidence="1">Binds 2 magnesium ions per tetramer.</text>
</comment>
<comment type="subunit">
    <text evidence="1">Tetramer of two alpha and two beta subunits.</text>
</comment>
<comment type="subcellular location">
    <subcellularLocation>
        <location evidence="1">Cytoplasm</location>
    </subcellularLocation>
</comment>
<comment type="similarity">
    <text evidence="1">Belongs to the class-II aminoacyl-tRNA synthetase family. Phe-tRNA synthetase alpha subunit type 1 subfamily.</text>
</comment>
<reference key="1">
    <citation type="journal article" date="2007" name="Science">
        <title>Legumes symbioses: absence of nod genes in photosynthetic bradyrhizobia.</title>
        <authorList>
            <person name="Giraud E."/>
            <person name="Moulin L."/>
            <person name="Vallenet D."/>
            <person name="Barbe V."/>
            <person name="Cytryn E."/>
            <person name="Avarre J.-C."/>
            <person name="Jaubert M."/>
            <person name="Simon D."/>
            <person name="Cartieaux F."/>
            <person name="Prin Y."/>
            <person name="Bena G."/>
            <person name="Hannibal L."/>
            <person name="Fardoux J."/>
            <person name="Kojadinovic M."/>
            <person name="Vuillet L."/>
            <person name="Lajus A."/>
            <person name="Cruveiller S."/>
            <person name="Rouy Z."/>
            <person name="Mangenot S."/>
            <person name="Segurens B."/>
            <person name="Dossat C."/>
            <person name="Franck W.L."/>
            <person name="Chang W.-S."/>
            <person name="Saunders E."/>
            <person name="Bruce D."/>
            <person name="Richardson P."/>
            <person name="Normand P."/>
            <person name="Dreyfus B."/>
            <person name="Pignol D."/>
            <person name="Stacey G."/>
            <person name="Emerich D."/>
            <person name="Vermeglio A."/>
            <person name="Medigue C."/>
            <person name="Sadowsky M."/>
        </authorList>
    </citation>
    <scope>NUCLEOTIDE SEQUENCE [LARGE SCALE GENOMIC DNA]</scope>
    <source>
        <strain>ORS 278</strain>
    </source>
</reference>
<protein>
    <recommendedName>
        <fullName evidence="1">Phenylalanine--tRNA ligase alpha subunit</fullName>
        <ecNumber evidence="1">6.1.1.20</ecNumber>
    </recommendedName>
    <alternativeName>
        <fullName evidence="1">Phenylalanyl-tRNA synthetase alpha subunit</fullName>
        <shortName evidence="1">PheRS</shortName>
    </alternativeName>
</protein>
<feature type="chain" id="PRO_1000006803" description="Phenylalanine--tRNA ligase alpha subunit">
    <location>
        <begin position="1"/>
        <end position="360"/>
    </location>
</feature>
<feature type="binding site" evidence="1">
    <location>
        <position position="260"/>
    </location>
    <ligand>
        <name>Mg(2+)</name>
        <dbReference type="ChEBI" id="CHEBI:18420"/>
        <note>shared with beta subunit</note>
    </ligand>
</feature>
<evidence type="ECO:0000255" key="1">
    <source>
        <dbReference type="HAMAP-Rule" id="MF_00281"/>
    </source>
</evidence>
<proteinExistence type="inferred from homology"/>
<organism>
    <name type="scientific">Bradyrhizobium sp. (strain ORS 278)</name>
    <dbReference type="NCBI Taxonomy" id="114615"/>
    <lineage>
        <taxon>Bacteria</taxon>
        <taxon>Pseudomonadati</taxon>
        <taxon>Pseudomonadota</taxon>
        <taxon>Alphaproteobacteria</taxon>
        <taxon>Hyphomicrobiales</taxon>
        <taxon>Nitrobacteraceae</taxon>
        <taxon>Bradyrhizobium</taxon>
    </lineage>
</organism>